<gene>
    <name evidence="9" type="primary">BDX</name>
    <name evidence="7" type="synonym">ATHA1-1</name>
    <name evidence="11" type="ordered locus">At4g32460</name>
    <name evidence="12" type="ORF">F8B4.160</name>
</gene>
<accession>Q8LAR0</accession>
<accession>Q0WWU1</accession>
<accession>Q9SUU6</accession>
<reference key="1">
    <citation type="journal article" date="1999" name="Nature">
        <title>Sequence and analysis of chromosome 4 of the plant Arabidopsis thaliana.</title>
        <authorList>
            <person name="Mayer K.F.X."/>
            <person name="Schueller C."/>
            <person name="Wambutt R."/>
            <person name="Murphy G."/>
            <person name="Volckaert G."/>
            <person name="Pohl T."/>
            <person name="Duesterhoeft A."/>
            <person name="Stiekema W."/>
            <person name="Entian K.-D."/>
            <person name="Terryn N."/>
            <person name="Harris B."/>
            <person name="Ansorge W."/>
            <person name="Brandt P."/>
            <person name="Grivell L.A."/>
            <person name="Rieger M."/>
            <person name="Weichselgartner M."/>
            <person name="de Simone V."/>
            <person name="Obermaier B."/>
            <person name="Mache R."/>
            <person name="Mueller M."/>
            <person name="Kreis M."/>
            <person name="Delseny M."/>
            <person name="Puigdomenech P."/>
            <person name="Watson M."/>
            <person name="Schmidtheini T."/>
            <person name="Reichert B."/>
            <person name="Portetelle D."/>
            <person name="Perez-Alonso M."/>
            <person name="Boutry M."/>
            <person name="Bancroft I."/>
            <person name="Vos P."/>
            <person name="Hoheisel J."/>
            <person name="Zimmermann W."/>
            <person name="Wedler H."/>
            <person name="Ridley P."/>
            <person name="Langham S.-A."/>
            <person name="McCullagh B."/>
            <person name="Bilham L."/>
            <person name="Robben J."/>
            <person name="van der Schueren J."/>
            <person name="Grymonprez B."/>
            <person name="Chuang Y.-J."/>
            <person name="Vandenbussche F."/>
            <person name="Braeken M."/>
            <person name="Weltjens I."/>
            <person name="Voet M."/>
            <person name="Bastiaens I."/>
            <person name="Aert R."/>
            <person name="Defoor E."/>
            <person name="Weitzenegger T."/>
            <person name="Bothe G."/>
            <person name="Ramsperger U."/>
            <person name="Hilbert H."/>
            <person name="Braun M."/>
            <person name="Holzer E."/>
            <person name="Brandt A."/>
            <person name="Peters S."/>
            <person name="van Staveren M."/>
            <person name="Dirkse W."/>
            <person name="Mooijman P."/>
            <person name="Klein Lankhorst R."/>
            <person name="Rose M."/>
            <person name="Hauf J."/>
            <person name="Koetter P."/>
            <person name="Berneiser S."/>
            <person name="Hempel S."/>
            <person name="Feldpausch M."/>
            <person name="Lamberth S."/>
            <person name="Van den Daele H."/>
            <person name="De Keyser A."/>
            <person name="Buysshaert C."/>
            <person name="Gielen J."/>
            <person name="Villarroel R."/>
            <person name="De Clercq R."/>
            <person name="van Montagu M."/>
            <person name="Rogers J."/>
            <person name="Cronin A."/>
            <person name="Quail M.A."/>
            <person name="Bray-Allen S."/>
            <person name="Clark L."/>
            <person name="Doggett J."/>
            <person name="Hall S."/>
            <person name="Kay M."/>
            <person name="Lennard N."/>
            <person name="McLay K."/>
            <person name="Mayes R."/>
            <person name="Pettett A."/>
            <person name="Rajandream M.A."/>
            <person name="Lyne M."/>
            <person name="Benes V."/>
            <person name="Rechmann S."/>
            <person name="Borkova D."/>
            <person name="Bloecker H."/>
            <person name="Scharfe M."/>
            <person name="Grimm M."/>
            <person name="Loehnert T.-H."/>
            <person name="Dose S."/>
            <person name="de Haan M."/>
            <person name="Maarse A.C."/>
            <person name="Schaefer M."/>
            <person name="Mueller-Auer S."/>
            <person name="Gabel C."/>
            <person name="Fuchs M."/>
            <person name="Fartmann B."/>
            <person name="Granderath K."/>
            <person name="Dauner D."/>
            <person name="Herzl A."/>
            <person name="Neumann S."/>
            <person name="Argiriou A."/>
            <person name="Vitale D."/>
            <person name="Liguori R."/>
            <person name="Piravandi E."/>
            <person name="Massenet O."/>
            <person name="Quigley F."/>
            <person name="Clabauld G."/>
            <person name="Muendlein A."/>
            <person name="Felber R."/>
            <person name="Schnabl S."/>
            <person name="Hiller R."/>
            <person name="Schmidt W."/>
            <person name="Lecharny A."/>
            <person name="Aubourg S."/>
            <person name="Chefdor F."/>
            <person name="Cooke R."/>
            <person name="Berger C."/>
            <person name="Monfort A."/>
            <person name="Casacuberta E."/>
            <person name="Gibbons T."/>
            <person name="Weber N."/>
            <person name="Vandenbol M."/>
            <person name="Bargues M."/>
            <person name="Terol J."/>
            <person name="Torres A."/>
            <person name="Perez-Perez A."/>
            <person name="Purnelle B."/>
            <person name="Bent E."/>
            <person name="Johnson S."/>
            <person name="Tacon D."/>
            <person name="Jesse T."/>
            <person name="Heijnen L."/>
            <person name="Schwarz S."/>
            <person name="Scholler P."/>
            <person name="Heber S."/>
            <person name="Francs P."/>
            <person name="Bielke C."/>
            <person name="Frishman D."/>
            <person name="Haase D."/>
            <person name="Lemcke K."/>
            <person name="Mewes H.-W."/>
            <person name="Stocker S."/>
            <person name="Zaccaria P."/>
            <person name="Bevan M."/>
            <person name="Wilson R.K."/>
            <person name="de la Bastide M."/>
            <person name="Habermann K."/>
            <person name="Parnell L."/>
            <person name="Dedhia N."/>
            <person name="Gnoj L."/>
            <person name="Schutz K."/>
            <person name="Huang E."/>
            <person name="Spiegel L."/>
            <person name="Sekhon M."/>
            <person name="Murray J."/>
            <person name="Sheet P."/>
            <person name="Cordes M."/>
            <person name="Abu-Threideh J."/>
            <person name="Stoneking T."/>
            <person name="Kalicki J."/>
            <person name="Graves T."/>
            <person name="Harmon G."/>
            <person name="Edwards J."/>
            <person name="Latreille P."/>
            <person name="Courtney L."/>
            <person name="Cloud J."/>
            <person name="Abbott A."/>
            <person name="Scott K."/>
            <person name="Johnson D."/>
            <person name="Minx P."/>
            <person name="Bentley D."/>
            <person name="Fulton B."/>
            <person name="Miller N."/>
            <person name="Greco T."/>
            <person name="Kemp K."/>
            <person name="Kramer J."/>
            <person name="Fulton L."/>
            <person name="Mardis E."/>
            <person name="Dante M."/>
            <person name="Pepin K."/>
            <person name="Hillier L.W."/>
            <person name="Nelson J."/>
            <person name="Spieth J."/>
            <person name="Ryan E."/>
            <person name="Andrews S."/>
            <person name="Geisel C."/>
            <person name="Layman D."/>
            <person name="Du H."/>
            <person name="Ali J."/>
            <person name="Berghoff A."/>
            <person name="Jones K."/>
            <person name="Drone K."/>
            <person name="Cotton M."/>
            <person name="Joshu C."/>
            <person name="Antonoiu B."/>
            <person name="Zidanic M."/>
            <person name="Strong C."/>
            <person name="Sun H."/>
            <person name="Lamar B."/>
            <person name="Yordan C."/>
            <person name="Ma P."/>
            <person name="Zhong J."/>
            <person name="Preston R."/>
            <person name="Vil D."/>
            <person name="Shekher M."/>
            <person name="Matero A."/>
            <person name="Shah R."/>
            <person name="Swaby I.K."/>
            <person name="O'Shaughnessy A."/>
            <person name="Rodriguez M."/>
            <person name="Hoffman J."/>
            <person name="Till S."/>
            <person name="Granat S."/>
            <person name="Shohdy N."/>
            <person name="Hasegawa A."/>
            <person name="Hameed A."/>
            <person name="Lodhi M."/>
            <person name="Johnson A."/>
            <person name="Chen E."/>
            <person name="Marra M.A."/>
            <person name="Martienssen R."/>
            <person name="McCombie W.R."/>
        </authorList>
    </citation>
    <scope>NUCLEOTIDE SEQUENCE [LARGE SCALE GENOMIC DNA]</scope>
    <source>
        <strain>cv. Columbia</strain>
    </source>
</reference>
<reference key="2">
    <citation type="journal article" date="2017" name="Plant J.">
        <title>Araport11: a complete reannotation of the Arabidopsis thaliana reference genome.</title>
        <authorList>
            <person name="Cheng C.Y."/>
            <person name="Krishnakumar V."/>
            <person name="Chan A.P."/>
            <person name="Thibaud-Nissen F."/>
            <person name="Schobel S."/>
            <person name="Town C.D."/>
        </authorList>
    </citation>
    <scope>GENOME REANNOTATION</scope>
    <source>
        <strain>cv. Columbia</strain>
    </source>
</reference>
<reference key="3">
    <citation type="submission" date="2006-04" db="EMBL/GenBank/DDBJ databases">
        <title>Arabidopsis ORF clones.</title>
        <authorList>
            <person name="Shinn P."/>
            <person name="Chen H."/>
            <person name="Kim C.J."/>
            <person name="Quinitio C."/>
            <person name="Ecker J.R."/>
        </authorList>
    </citation>
    <scope>NUCLEOTIDE SEQUENCE [LARGE SCALE MRNA] (ISOFORM 1)</scope>
    <source>
        <strain>cv. Columbia</strain>
    </source>
</reference>
<reference key="4">
    <citation type="submission" date="2006-07" db="EMBL/GenBank/DDBJ databases">
        <title>Large-scale analysis of RIKEN Arabidopsis full-length (RAFL) cDNAs.</title>
        <authorList>
            <person name="Totoki Y."/>
            <person name="Seki M."/>
            <person name="Ishida J."/>
            <person name="Nakajima M."/>
            <person name="Enju A."/>
            <person name="Kamiya A."/>
            <person name="Narusaka M."/>
            <person name="Shin-i T."/>
            <person name="Nakagawa M."/>
            <person name="Sakamoto N."/>
            <person name="Oishi K."/>
            <person name="Kohara Y."/>
            <person name="Kobayashi M."/>
            <person name="Toyoda A."/>
            <person name="Sakaki Y."/>
            <person name="Sakurai T."/>
            <person name="Iida K."/>
            <person name="Akiyama K."/>
            <person name="Satou M."/>
            <person name="Toyoda T."/>
            <person name="Konagaya A."/>
            <person name="Carninci P."/>
            <person name="Kawai J."/>
            <person name="Hayashizaki Y."/>
            <person name="Shinozaki K."/>
        </authorList>
    </citation>
    <scope>NUCLEOTIDE SEQUENCE [LARGE SCALE MRNA] (ISOFORM 1)</scope>
    <source>
        <strain>cv. Columbia</strain>
    </source>
</reference>
<reference key="5">
    <citation type="submission" date="2002-03" db="EMBL/GenBank/DDBJ databases">
        <title>Full-length cDNA from Arabidopsis thaliana.</title>
        <authorList>
            <person name="Brover V.V."/>
            <person name="Troukhan M.E."/>
            <person name="Alexandrov N.A."/>
            <person name="Lu Y.-P."/>
            <person name="Flavell R.B."/>
            <person name="Feldmann K.A."/>
        </authorList>
    </citation>
    <scope>NUCLEOTIDE SEQUENCE [LARGE SCALE MRNA] (ISOFORM 1)</scope>
</reference>
<reference key="6">
    <citation type="journal article" date="2012" name="Mol. Phylogenet. Evol.">
        <title>The highly conserved spermatophyte cell wall DUF642 protein family: phylogeny and first evidence of interaction with cell wall polysaccharides in vitro.</title>
        <authorList>
            <person name="Vazquez-Lobo A."/>
            <person name="Roujol D."/>
            <person name="Zuniga-Sanchez E."/>
            <person name="Albenne C."/>
            <person name="Pinero D."/>
            <person name="Gamboa de Buen A."/>
            <person name="Jamet E."/>
        </authorList>
    </citation>
    <scope>GENE FAMILY</scope>
</reference>
<reference key="7">
    <citation type="journal article" date="2014" name="BMC Plant Biol.">
        <title>BIIDXI, the At4g32460 DUF642 gene, is involved in pectin methyl esterase regulation during Arabidopsis thaliana seed germination and plant development.</title>
        <authorList>
            <person name="Zuniga-Sanchez E."/>
            <person name="Soriano D."/>
            <person name="Martinez-Barajas E."/>
            <person name="Orozco-Segovia A."/>
            <person name="Gamboa-deBuen A."/>
        </authorList>
    </citation>
    <scope>FUNCTION</scope>
    <scope>DISRUPTION PHENOTYPE</scope>
    <scope>INTERACTION WITH PME3</scope>
    <scope>TISSUE SPECIFICITY</scope>
    <scope>DEVELOPMENTAL STAGE</scope>
    <scope>INDUCTION BY AUXIN AND GIBBERELLIC ACID</scope>
    <source>
        <strain>cv. Columbia</strain>
    </source>
</reference>
<reference key="8">
    <citation type="journal article" date="2017" name="Plant Pathol. J.">
        <title>Cell wall localization of two DUF642 proteins, BIIDXI and TEEBE, during Meloidogyne incognita early inoculation.</title>
        <authorList>
            <person name="Salazar-Iribe A."/>
            <person name="Zuniga-Sanchez E."/>
            <person name="Mejia E.Z."/>
            <person name="Gamboa-deBuen A."/>
        </authorList>
    </citation>
    <scope>INDUCTION BY AUXIN AND NEMATODE</scope>
    <scope>SUBCELLULAR LOCATION</scope>
    <source>
        <strain>cv. Columbia</strain>
    </source>
</reference>
<reference key="9">
    <citation type="journal article" date="2018" name="Biochem. Biophys. Res. Commun.">
        <title>Degree of pectin methyl esterification in endosperm cell walls is involved in embryo bending in Arabidopsis thaliana.</title>
        <authorList>
            <person name="Cruz-Valderrama J.E."/>
            <person name="Jimenez-Duran K."/>
            <person name="Zuniga-Sanchez E."/>
            <person name="Salazar-Iribe A."/>
            <person name="Marquez-Guzman J."/>
            <person name="Gamboa-deBuen A."/>
        </authorList>
    </citation>
    <scope>FUNCTION</scope>
    <scope>DISRUPTION PHENOTYPE</scope>
    <source>
        <strain>cv. Columbia</strain>
    </source>
</reference>
<reference key="10">
    <citation type="journal article" date="2018" name="J. Plant Physiol.">
        <title>BIIDXI, a DUF642 cell wall protein, is involved in hypocotyl growth via auxin efflux.</title>
        <authorList>
            <person name="Salazar-Iribe A."/>
            <person name="Cruz-Valderrama J.E."/>
            <person name="Jimenez-Duran K."/>
            <person name="Gomez-Maqueo X."/>
            <person name="Gamboa-deBuen A."/>
        </authorList>
    </citation>
    <scope>FUNCTION</scope>
    <scope>DISRUPTION PHENOTYPE</scope>
    <scope>INDUCTION BY AUXIN</scope>
    <scope>SUBCELLULAR LOCATION</scope>
    <source>
        <strain>cv. Columbia</strain>
    </source>
</reference>
<reference key="11">
    <citation type="journal article" date="2019" name="Int. J. Mol. Sci.">
        <title>Overview of the role of cell wall DUF642 proteins in plant development.</title>
        <authorList>
            <person name="Cruz-Valderrama J.E."/>
            <person name="Gomez-Maqueo X."/>
            <person name="Salazar-Iribe A."/>
            <person name="Zuniga-Sanchez E."/>
            <person name="Hernandez-Barrera A."/>
            <person name="Quezada-Rodriguez E."/>
            <person name="Gamboa-deBuen A."/>
        </authorList>
    </citation>
    <scope>REVIEW ON DUF642 PROTEINS</scope>
</reference>
<feature type="signal peptide" evidence="1">
    <location>
        <begin position="1"/>
        <end position="21"/>
    </location>
</feature>
<feature type="chain" id="PRO_5014312196" description="Protein BIIDXI">
    <location>
        <begin position="22"/>
        <end position="365"/>
    </location>
</feature>
<feature type="glycosylation site" description="N-linked (GlcNAc...) asparagine" evidence="2">
    <location>
        <position position="48"/>
    </location>
</feature>
<feature type="glycosylation site" description="N-linked (GlcNAc...) asparagine" evidence="2">
    <location>
        <position position="121"/>
    </location>
</feature>
<feature type="glycosylation site" description="N-linked (GlcNAc...) asparagine" evidence="2">
    <location>
        <position position="208"/>
    </location>
</feature>
<feature type="splice variant" id="VSP_062012" description="In isoform 2.">
    <location>
        <begin position="1"/>
        <end position="40"/>
    </location>
</feature>
<feature type="sequence conflict" description="In Ref. 4; BAE98407." evidence="10" ref="4">
    <original>P</original>
    <variation>T</variation>
    <location>
        <position position="188"/>
    </location>
</feature>
<comment type="function">
    <text evidence="3 4 5 6">Together with At5g11420, acts as a positive regulator of PME3 activity during several developmental processes, including reproductive organ development, hypocotyls elongation, seed germination and endosperm (testa) rupture at the micropyle, probably by modulating the pectin methylation status in cell walls (PubMed:25442819). Involved in the regulation of pectin methylation degree to modulate cell wall physiology during cell separation, hypocotyl growth and embryo development (PubMed:29137987, PubMed:29238286, PubMed:30253266). Required during embryo development, especially to regulate homogalacturonans (HG) methyl esterification in endosperm cell walls, a process related to embryo bending (PubMed:29137987). Also implicated in hypocotyl growth and gravitropic response via the regulation of auxin efflux (PubMed:30253266). Also regulates cell wall pectin upon root-knot nematode Meloidogyne incognita infection (PubMed:29238286).</text>
</comment>
<comment type="subunit">
    <text evidence="8">Interacts with PME3.</text>
</comment>
<comment type="subcellular location">
    <subcellularLocation>
        <location evidence="5 6">Secreted</location>
        <location evidence="5 6">Cell wall</location>
    </subcellularLocation>
    <text evidence="5 6">Accumulates at the cell wall upon root-knot nematode Meloidogyne incognita infection (PubMed:29238286). Observed in epidermal cells of both hypocotyls and primary roots (PubMed:30253266).</text>
</comment>
<comment type="alternative products">
    <event type="alternative splicing"/>
    <isoform>
        <id>Q8LAR0-1</id>
        <name>1</name>
        <sequence type="displayed"/>
    </isoform>
    <isoform>
        <id>Q8LAR0-2</id>
        <name>2</name>
        <sequence type="described" ref="VSP_062012"/>
    </isoform>
</comment>
<comment type="tissue specificity">
    <text evidence="3">Mainly expressed in vascular tissues of roots, leaves, stamens and petals.</text>
</comment>
<comment type="developmental stage">
    <text evidence="3">Not present in dry seeds (PubMed:25442819). First observed in provascular cells from the radicle meristematic region of the mature embryo and in embryos at the torpedo and heart stages (PubMed:25442819). Present in the vascular tissue of radicles from germinating seeds, 6 hours after imbibition (PubMed:25442819). In primary roots, confined to the provascular tissue of the meristematic and transition zone (PubMed:25442819). In young seedlings, detected in pericycle cells of the root differentiation zone (PubMed:25442819). In mature plants, observed in the vascular tissue at specific regions of root mature zone (PubMed:25442819). Also expressed in the vascular tissue of fully expanded leaves (PubMed:25442819). During different stages of flower development, restricted to the vascular tissue of stamen filaments and anthers, in petals, and in the stigmatic papilla (PubMed:25442819).</text>
</comment>
<comment type="induction">
    <text evidence="3 5">By auxin (IAA and NPA) and gibberellic acid (GA) during germination and in roots (PubMed:25442819, PubMed:29238286). Highly and early up-regulated in roots during root-knot nematode Meloidogyne incognita infection (PubMed:29238286).</text>
</comment>
<comment type="disruption phenotype">
    <text evidence="3 4 6">Decreased PME3 activity in leaves associated with empty short siliques missing seeds or with heterogeneous seeds, as well as several morphological and developmental defects, such as abnormal carpel morphology, decreased stigma size, septum with engrossed regions and badly differentiated ovules tissues (PubMed:25442819, PubMed:29137987). Misshapen embryos with modified methyl esterification status of homogalacturonans in seeds and associated with abnormal radical and embryo bending (PubMed:29137987). Long hypocotyls under continuous light with auxin accumulation in epidermal cells and altered distribution pattern of PIN1 as well as a decrease in de-methylesterified pectins (PubMed:30253266). Increased auxin-dependent gravitropic response (PubMed:30253266).</text>
</comment>
<comment type="miscellaneous">
    <text evidence="8">'BIIDXI' means seed in the Zapotec language.</text>
</comment>
<name>B2DXI_ARATH</name>
<organism>
    <name type="scientific">Arabidopsis thaliana</name>
    <name type="common">Mouse-ear cress</name>
    <dbReference type="NCBI Taxonomy" id="3702"/>
    <lineage>
        <taxon>Eukaryota</taxon>
        <taxon>Viridiplantae</taxon>
        <taxon>Streptophyta</taxon>
        <taxon>Embryophyta</taxon>
        <taxon>Tracheophyta</taxon>
        <taxon>Spermatophyta</taxon>
        <taxon>Magnoliopsida</taxon>
        <taxon>eudicotyledons</taxon>
        <taxon>Gunneridae</taxon>
        <taxon>Pentapetalae</taxon>
        <taxon>rosids</taxon>
        <taxon>malvids</taxon>
        <taxon>Brassicales</taxon>
        <taxon>Brassicaceae</taxon>
        <taxon>Camelineae</taxon>
        <taxon>Arabidopsis</taxon>
    </lineage>
</organism>
<proteinExistence type="evidence at protein level"/>
<dbReference type="EMBL" id="AL034567">
    <property type="protein sequence ID" value="CAA22573.1"/>
    <property type="molecule type" value="Genomic_DNA"/>
</dbReference>
<dbReference type="EMBL" id="AL161581">
    <property type="protein sequence ID" value="CAB79963.1"/>
    <property type="molecule type" value="Genomic_DNA"/>
</dbReference>
<dbReference type="EMBL" id="CP002687">
    <property type="protein sequence ID" value="AEE86063.1"/>
    <property type="molecule type" value="Genomic_DNA"/>
</dbReference>
<dbReference type="EMBL" id="CP002687">
    <property type="protein sequence ID" value="AEE86064.1"/>
    <property type="molecule type" value="Genomic_DNA"/>
</dbReference>
<dbReference type="EMBL" id="CP002687">
    <property type="protein sequence ID" value="ANM67829.1"/>
    <property type="molecule type" value="Genomic_DNA"/>
</dbReference>
<dbReference type="EMBL" id="CP002687">
    <property type="protein sequence ID" value="ANM67830.1"/>
    <property type="molecule type" value="Genomic_DNA"/>
</dbReference>
<dbReference type="EMBL" id="BT025248">
    <property type="protein sequence ID" value="ABF19001.1"/>
    <property type="molecule type" value="mRNA"/>
</dbReference>
<dbReference type="EMBL" id="AK226244">
    <property type="protein sequence ID" value="BAE98407.1"/>
    <property type="molecule type" value="mRNA"/>
</dbReference>
<dbReference type="EMBL" id="AY087668">
    <property type="protein sequence ID" value="AAM65206.1"/>
    <property type="molecule type" value="mRNA"/>
</dbReference>
<dbReference type="PIR" id="T05356">
    <property type="entry name" value="T05356"/>
</dbReference>
<dbReference type="RefSeq" id="NP_001329630.1">
    <molecule id="Q8LAR0-2"/>
    <property type="nucleotide sequence ID" value="NM_001342152.1"/>
</dbReference>
<dbReference type="RefSeq" id="NP_001329631.1">
    <molecule id="Q8LAR0-2"/>
    <property type="nucleotide sequence ID" value="NM_001342153.1"/>
</dbReference>
<dbReference type="RefSeq" id="NP_567894.1">
    <molecule id="Q8LAR0-1"/>
    <property type="nucleotide sequence ID" value="NM_119398.4"/>
</dbReference>
<dbReference type="RefSeq" id="NP_974661.1">
    <molecule id="Q8LAR0-1"/>
    <property type="nucleotide sequence ID" value="NM_202932.1"/>
</dbReference>
<dbReference type="FunCoup" id="Q8LAR0">
    <property type="interactions" value="252"/>
</dbReference>
<dbReference type="STRING" id="3702.Q8LAR0"/>
<dbReference type="GlyGen" id="Q8LAR0">
    <property type="glycosylation" value="3 sites"/>
</dbReference>
<dbReference type="PaxDb" id="3702-AT4G32460.1"/>
<dbReference type="ProteomicsDB" id="185823"/>
<dbReference type="ProteomicsDB" id="187038"/>
<dbReference type="EnsemblPlants" id="AT4G32460.1">
    <molecule id="Q8LAR0-1"/>
    <property type="protein sequence ID" value="AT4G32460.1"/>
    <property type="gene ID" value="AT4G32460"/>
</dbReference>
<dbReference type="EnsemblPlants" id="AT4G32460.2">
    <molecule id="Q8LAR0-1"/>
    <property type="protein sequence ID" value="AT4G32460.2"/>
    <property type="gene ID" value="AT4G32460"/>
</dbReference>
<dbReference type="EnsemblPlants" id="AT4G32460.3">
    <molecule id="Q8LAR0-2"/>
    <property type="protein sequence ID" value="AT4G32460.3"/>
    <property type="gene ID" value="AT4G32460"/>
</dbReference>
<dbReference type="EnsemblPlants" id="AT4G32460.4">
    <molecule id="Q8LAR0-2"/>
    <property type="protein sequence ID" value="AT4G32460.4"/>
    <property type="gene ID" value="AT4G32460"/>
</dbReference>
<dbReference type="GeneID" id="829381"/>
<dbReference type="Gramene" id="AT4G32460.1">
    <molecule id="Q8LAR0-1"/>
    <property type="protein sequence ID" value="AT4G32460.1"/>
    <property type="gene ID" value="AT4G32460"/>
</dbReference>
<dbReference type="Gramene" id="AT4G32460.2">
    <molecule id="Q8LAR0-1"/>
    <property type="protein sequence ID" value="AT4G32460.2"/>
    <property type="gene ID" value="AT4G32460"/>
</dbReference>
<dbReference type="Gramene" id="AT4G32460.3">
    <molecule id="Q8LAR0-2"/>
    <property type="protein sequence ID" value="AT4G32460.3"/>
    <property type="gene ID" value="AT4G32460"/>
</dbReference>
<dbReference type="Gramene" id="AT4G32460.4">
    <molecule id="Q8LAR0-2"/>
    <property type="protein sequence ID" value="AT4G32460.4"/>
    <property type="gene ID" value="AT4G32460"/>
</dbReference>
<dbReference type="KEGG" id="ath:AT4G32460"/>
<dbReference type="Araport" id="AT4G32460"/>
<dbReference type="TAIR" id="AT4G32460"/>
<dbReference type="eggNOG" id="ENOG502QRP6">
    <property type="taxonomic scope" value="Eukaryota"/>
</dbReference>
<dbReference type="HOGENOM" id="CLU_040251_0_0_1"/>
<dbReference type="OMA" id="GPRHSDM"/>
<dbReference type="PRO" id="PR:Q8LAR0"/>
<dbReference type="Proteomes" id="UP000006548">
    <property type="component" value="Chromosome 4"/>
</dbReference>
<dbReference type="ExpressionAtlas" id="Q8LAR0">
    <property type="expression patterns" value="baseline and differential"/>
</dbReference>
<dbReference type="GO" id="GO:0005576">
    <property type="term" value="C:extracellular region"/>
    <property type="evidence" value="ECO:0007669"/>
    <property type="project" value="UniProtKB-KW"/>
</dbReference>
<dbReference type="GO" id="GO:0009505">
    <property type="term" value="C:plant-type cell wall"/>
    <property type="evidence" value="ECO:0000314"/>
    <property type="project" value="UniProtKB"/>
</dbReference>
<dbReference type="GO" id="GO:0009734">
    <property type="term" value="P:auxin-activated signaling pathway"/>
    <property type="evidence" value="ECO:0007669"/>
    <property type="project" value="UniProtKB-KW"/>
</dbReference>
<dbReference type="GO" id="GO:0009793">
    <property type="term" value="P:embryo development ending in seed dormancy"/>
    <property type="evidence" value="ECO:0000315"/>
    <property type="project" value="TAIR"/>
</dbReference>
<dbReference type="GO" id="GO:0048598">
    <property type="term" value="P:embryonic morphogenesis"/>
    <property type="evidence" value="ECO:0000315"/>
    <property type="project" value="UniProtKB"/>
</dbReference>
<dbReference type="GO" id="GO:0009630">
    <property type="term" value="P:gravitropism"/>
    <property type="evidence" value="ECO:0000315"/>
    <property type="project" value="UniProtKB"/>
</dbReference>
<dbReference type="GO" id="GO:0045489">
    <property type="term" value="P:pectin biosynthetic process"/>
    <property type="evidence" value="ECO:0000315"/>
    <property type="project" value="TAIR"/>
</dbReference>
<dbReference type="GO" id="GO:0010030">
    <property type="term" value="P:positive regulation of seed germination"/>
    <property type="evidence" value="ECO:0000315"/>
    <property type="project" value="UniProtKB"/>
</dbReference>
<dbReference type="GO" id="GO:2000012">
    <property type="term" value="P:regulation of auxin polar transport"/>
    <property type="evidence" value="ECO:0000315"/>
    <property type="project" value="UniProtKB"/>
</dbReference>
<dbReference type="GO" id="GO:1902066">
    <property type="term" value="P:regulation of cell wall pectin metabolic process"/>
    <property type="evidence" value="ECO:0000315"/>
    <property type="project" value="UniProtKB"/>
</dbReference>
<dbReference type="GO" id="GO:1905421">
    <property type="term" value="P:regulation of plant organ morphogenesis"/>
    <property type="evidence" value="ECO:0000315"/>
    <property type="project" value="UniProtKB"/>
</dbReference>
<dbReference type="GO" id="GO:0048608">
    <property type="term" value="P:reproductive structure development"/>
    <property type="evidence" value="ECO:0000315"/>
    <property type="project" value="UniProtKB"/>
</dbReference>
<dbReference type="GO" id="GO:0009733">
    <property type="term" value="P:response to auxin"/>
    <property type="evidence" value="ECO:0000270"/>
    <property type="project" value="UniProtKB"/>
</dbReference>
<dbReference type="GO" id="GO:0009739">
    <property type="term" value="P:response to gibberellin"/>
    <property type="evidence" value="ECO:0000270"/>
    <property type="project" value="UniProtKB"/>
</dbReference>
<dbReference type="GO" id="GO:0009624">
    <property type="term" value="P:response to nematode"/>
    <property type="evidence" value="ECO:0000270"/>
    <property type="project" value="UniProtKB"/>
</dbReference>
<dbReference type="FunFam" id="2.60.120.260:FF:000031">
    <property type="entry name" value="DUF642 family protein"/>
    <property type="match status" value="1"/>
</dbReference>
<dbReference type="Gene3D" id="2.60.120.260">
    <property type="entry name" value="Galactose-binding domain-like"/>
    <property type="match status" value="2"/>
</dbReference>
<dbReference type="InterPro" id="IPR006946">
    <property type="entry name" value="DGR2-like_dom"/>
</dbReference>
<dbReference type="InterPro" id="IPR008979">
    <property type="entry name" value="Galactose-bd-like_sf"/>
</dbReference>
<dbReference type="InterPro" id="IPR052437">
    <property type="entry name" value="Pectin_Meth_Modulator"/>
</dbReference>
<dbReference type="PANTHER" id="PTHR31265:SF35">
    <property type="entry name" value="GENOME ASSEMBLY, CHROMOSOME: A01"/>
    <property type="match status" value="1"/>
</dbReference>
<dbReference type="PANTHER" id="PTHR31265">
    <property type="entry name" value="OS02G0527500 PROTEIN-RELATED"/>
    <property type="match status" value="1"/>
</dbReference>
<dbReference type="Pfam" id="PF04862">
    <property type="entry name" value="DUF642"/>
    <property type="match status" value="2"/>
</dbReference>
<dbReference type="SUPFAM" id="SSF49785">
    <property type="entry name" value="Galactose-binding domain-like"/>
    <property type="match status" value="1"/>
</dbReference>
<protein>
    <recommendedName>
        <fullName evidence="9">Protein BIIDXI</fullName>
    </recommendedName>
</protein>
<evidence type="ECO:0000255" key="1"/>
<evidence type="ECO:0000255" key="2">
    <source>
        <dbReference type="PROSITE-ProRule" id="PRU00498"/>
    </source>
</evidence>
<evidence type="ECO:0000269" key="3">
    <source>
    </source>
</evidence>
<evidence type="ECO:0000269" key="4">
    <source>
    </source>
</evidence>
<evidence type="ECO:0000269" key="5">
    <source>
    </source>
</evidence>
<evidence type="ECO:0000269" key="6">
    <source>
    </source>
</evidence>
<evidence type="ECO:0000303" key="7">
    <source>
    </source>
</evidence>
<evidence type="ECO:0000303" key="8">
    <source>
    </source>
</evidence>
<evidence type="ECO:0000303" key="9">
    <source>
    </source>
</evidence>
<evidence type="ECO:0000305" key="10"/>
<evidence type="ECO:0000312" key="11">
    <source>
        <dbReference type="Araport" id="AT4G32460"/>
    </source>
</evidence>
<evidence type="ECO:0000312" key="12">
    <source>
        <dbReference type="EMBL" id="CAA22573.1"/>
    </source>
</evidence>
<keyword id="KW-0025">Alternative splicing</keyword>
<keyword id="KW-0927">Auxin signaling pathway</keyword>
<keyword id="KW-0134">Cell wall</keyword>
<keyword id="KW-0217">Developmental protein</keyword>
<keyword id="KW-0325">Glycoprotein</keyword>
<keyword id="KW-1185">Reference proteome</keyword>
<keyword id="KW-0964">Secreted</keyword>
<keyword id="KW-0732">Signal</keyword>
<sequence length="365" mass="39819">MKEMGVIVLLLLHSFFYVAFCFNDGLLPNGDFELGPRHSDMKGTQVINITAIPNWELSGFVEYIPSGHKQGDMILVVPKGAFAVRLGNEASIKQKISVKKGSYYSITFSAARTCAQDERLNVSVAPHHAVMPIQTVYSSSGWDLYSWAFKAQSDYADIVIHNPGVEEDPACGPLIDGVAMRALFPPRPTNKNILKNGGFEEGPWVLPNISSGVLIPPNSIDDHSPLPGWMVESLKAVKYIDSDHFSVPQGRRAVELVAGKESAVAQVVRTIPGKTYVLSFSVGDASNACAGSMIVEAFAGKDTIKVPYESKGKGGFKRSSLRFVAVSSRTRVMFYSTFYAMRNDDFSSLCGPVIDDVKLLSARRP</sequence>